<name>MURA_JANSC</name>
<sequence length="420" mass="44062">MDRIVVKGSGPLSGQIPIAGAKNTCLKLMCAALLSDEPLTLTNVPRLSDVATLSELLESLGVQIGRLDDGQTLAFSANTLTSQLAHYDIVRKLRASFNVLGPLLGRTGQAVVSLPGGCAIGARAVDFHITGLEAMGAKIELKDGYVHAAGDLKGAEIEFPFPSVGATENVMCAAVRAKGTTVIKNAAREPDTKALADCLIAMGADIEGAGTETMIVRGVDRLHGATHRVIADRIEMGTYMCAPGIAGGEVECLGGTRALVASLCDKMEAAGLEITETDAGLKVRHPGGRLKAVDVATAPFPGFPTDLQAQFMAMMCFADGTSVLEETIFENRFMHAPELIRMGASIDVQGNTARVTGVDRLRGAPVMATDLRASVSLILAGLAADGETTVNRVYHLDRGYEHLVRKLRGVGANVERLSDG</sequence>
<proteinExistence type="inferred from homology"/>
<comment type="function">
    <text evidence="1">Cell wall formation. Adds enolpyruvyl to UDP-N-acetylglucosamine.</text>
</comment>
<comment type="catalytic activity">
    <reaction evidence="1">
        <text>phosphoenolpyruvate + UDP-N-acetyl-alpha-D-glucosamine = UDP-N-acetyl-3-O-(1-carboxyvinyl)-alpha-D-glucosamine + phosphate</text>
        <dbReference type="Rhea" id="RHEA:18681"/>
        <dbReference type="ChEBI" id="CHEBI:43474"/>
        <dbReference type="ChEBI" id="CHEBI:57705"/>
        <dbReference type="ChEBI" id="CHEBI:58702"/>
        <dbReference type="ChEBI" id="CHEBI:68483"/>
        <dbReference type="EC" id="2.5.1.7"/>
    </reaction>
</comment>
<comment type="pathway">
    <text evidence="1">Cell wall biogenesis; peptidoglycan biosynthesis.</text>
</comment>
<comment type="subcellular location">
    <subcellularLocation>
        <location evidence="1">Cytoplasm</location>
    </subcellularLocation>
</comment>
<comment type="similarity">
    <text evidence="1">Belongs to the EPSP synthase family. MurA subfamily.</text>
</comment>
<accession>Q28NA9</accession>
<dbReference type="EC" id="2.5.1.7" evidence="1"/>
<dbReference type="EMBL" id="CP000264">
    <property type="protein sequence ID" value="ABD55803.1"/>
    <property type="molecule type" value="Genomic_DNA"/>
</dbReference>
<dbReference type="RefSeq" id="WP_011456007.1">
    <property type="nucleotide sequence ID" value="NC_007802.1"/>
</dbReference>
<dbReference type="SMR" id="Q28NA9"/>
<dbReference type="STRING" id="290400.Jann_2886"/>
<dbReference type="KEGG" id="jan:Jann_2886"/>
<dbReference type="eggNOG" id="COG0766">
    <property type="taxonomic scope" value="Bacteria"/>
</dbReference>
<dbReference type="HOGENOM" id="CLU_027387_0_0_5"/>
<dbReference type="OrthoDB" id="9803760at2"/>
<dbReference type="UniPathway" id="UPA00219"/>
<dbReference type="Proteomes" id="UP000008326">
    <property type="component" value="Chromosome"/>
</dbReference>
<dbReference type="GO" id="GO:0005737">
    <property type="term" value="C:cytoplasm"/>
    <property type="evidence" value="ECO:0007669"/>
    <property type="project" value="UniProtKB-SubCell"/>
</dbReference>
<dbReference type="GO" id="GO:0008760">
    <property type="term" value="F:UDP-N-acetylglucosamine 1-carboxyvinyltransferase activity"/>
    <property type="evidence" value="ECO:0007669"/>
    <property type="project" value="UniProtKB-UniRule"/>
</dbReference>
<dbReference type="GO" id="GO:0051301">
    <property type="term" value="P:cell division"/>
    <property type="evidence" value="ECO:0007669"/>
    <property type="project" value="UniProtKB-KW"/>
</dbReference>
<dbReference type="GO" id="GO:0071555">
    <property type="term" value="P:cell wall organization"/>
    <property type="evidence" value="ECO:0007669"/>
    <property type="project" value="UniProtKB-KW"/>
</dbReference>
<dbReference type="GO" id="GO:0009252">
    <property type="term" value="P:peptidoglycan biosynthetic process"/>
    <property type="evidence" value="ECO:0007669"/>
    <property type="project" value="UniProtKB-UniRule"/>
</dbReference>
<dbReference type="GO" id="GO:0008360">
    <property type="term" value="P:regulation of cell shape"/>
    <property type="evidence" value="ECO:0007669"/>
    <property type="project" value="UniProtKB-KW"/>
</dbReference>
<dbReference type="GO" id="GO:0019277">
    <property type="term" value="P:UDP-N-acetylgalactosamine biosynthetic process"/>
    <property type="evidence" value="ECO:0007669"/>
    <property type="project" value="InterPro"/>
</dbReference>
<dbReference type="CDD" id="cd01555">
    <property type="entry name" value="UdpNAET"/>
    <property type="match status" value="1"/>
</dbReference>
<dbReference type="FunFam" id="3.65.10.10:FF:000001">
    <property type="entry name" value="UDP-N-acetylglucosamine 1-carboxyvinyltransferase"/>
    <property type="match status" value="1"/>
</dbReference>
<dbReference type="Gene3D" id="3.65.10.10">
    <property type="entry name" value="Enolpyruvate transferase domain"/>
    <property type="match status" value="2"/>
</dbReference>
<dbReference type="HAMAP" id="MF_00111">
    <property type="entry name" value="MurA"/>
    <property type="match status" value="1"/>
</dbReference>
<dbReference type="InterPro" id="IPR001986">
    <property type="entry name" value="Enolpyruvate_Tfrase_dom"/>
</dbReference>
<dbReference type="InterPro" id="IPR036968">
    <property type="entry name" value="Enolpyruvate_Tfrase_sf"/>
</dbReference>
<dbReference type="InterPro" id="IPR050068">
    <property type="entry name" value="MurA_subfamily"/>
</dbReference>
<dbReference type="InterPro" id="IPR013792">
    <property type="entry name" value="RNA3'P_cycl/enolpyr_Trfase_a/b"/>
</dbReference>
<dbReference type="InterPro" id="IPR005750">
    <property type="entry name" value="UDP_GlcNAc_COvinyl_MurA"/>
</dbReference>
<dbReference type="NCBIfam" id="TIGR01072">
    <property type="entry name" value="murA"/>
    <property type="match status" value="1"/>
</dbReference>
<dbReference type="NCBIfam" id="NF006873">
    <property type="entry name" value="PRK09369.1"/>
    <property type="match status" value="1"/>
</dbReference>
<dbReference type="PANTHER" id="PTHR43783">
    <property type="entry name" value="UDP-N-ACETYLGLUCOSAMINE 1-CARBOXYVINYLTRANSFERASE"/>
    <property type="match status" value="1"/>
</dbReference>
<dbReference type="PANTHER" id="PTHR43783:SF1">
    <property type="entry name" value="UDP-N-ACETYLGLUCOSAMINE 1-CARBOXYVINYLTRANSFERASE"/>
    <property type="match status" value="1"/>
</dbReference>
<dbReference type="Pfam" id="PF00275">
    <property type="entry name" value="EPSP_synthase"/>
    <property type="match status" value="1"/>
</dbReference>
<dbReference type="SUPFAM" id="SSF55205">
    <property type="entry name" value="EPT/RTPC-like"/>
    <property type="match status" value="1"/>
</dbReference>
<keyword id="KW-0131">Cell cycle</keyword>
<keyword id="KW-0132">Cell division</keyword>
<keyword id="KW-0133">Cell shape</keyword>
<keyword id="KW-0961">Cell wall biogenesis/degradation</keyword>
<keyword id="KW-0963">Cytoplasm</keyword>
<keyword id="KW-0573">Peptidoglycan synthesis</keyword>
<keyword id="KW-0670">Pyruvate</keyword>
<keyword id="KW-1185">Reference proteome</keyword>
<keyword id="KW-0808">Transferase</keyword>
<organism>
    <name type="scientific">Jannaschia sp. (strain CCS1)</name>
    <dbReference type="NCBI Taxonomy" id="290400"/>
    <lineage>
        <taxon>Bacteria</taxon>
        <taxon>Pseudomonadati</taxon>
        <taxon>Pseudomonadota</taxon>
        <taxon>Alphaproteobacteria</taxon>
        <taxon>Rhodobacterales</taxon>
        <taxon>Roseobacteraceae</taxon>
        <taxon>Jannaschia</taxon>
    </lineage>
</organism>
<feature type="chain" id="PRO_1000023048" description="UDP-N-acetylglucosamine 1-carboxyvinyltransferase">
    <location>
        <begin position="1"/>
        <end position="420"/>
    </location>
</feature>
<feature type="active site" description="Proton donor" evidence="1">
    <location>
        <position position="118"/>
    </location>
</feature>
<feature type="binding site" evidence="1">
    <location>
        <begin position="22"/>
        <end position="23"/>
    </location>
    <ligand>
        <name>phosphoenolpyruvate</name>
        <dbReference type="ChEBI" id="CHEBI:58702"/>
    </ligand>
</feature>
<feature type="binding site" evidence="1">
    <location>
        <position position="94"/>
    </location>
    <ligand>
        <name>UDP-N-acetyl-alpha-D-glucosamine</name>
        <dbReference type="ChEBI" id="CHEBI:57705"/>
    </ligand>
</feature>
<feature type="binding site" evidence="1">
    <location>
        <position position="306"/>
    </location>
    <ligand>
        <name>UDP-N-acetyl-alpha-D-glucosamine</name>
        <dbReference type="ChEBI" id="CHEBI:57705"/>
    </ligand>
</feature>
<feature type="binding site" evidence="1">
    <location>
        <position position="328"/>
    </location>
    <ligand>
        <name>UDP-N-acetyl-alpha-D-glucosamine</name>
        <dbReference type="ChEBI" id="CHEBI:57705"/>
    </ligand>
</feature>
<feature type="modified residue" description="2-(S-cysteinyl)pyruvic acid O-phosphothioketal" evidence="1">
    <location>
        <position position="118"/>
    </location>
</feature>
<protein>
    <recommendedName>
        <fullName evidence="1">UDP-N-acetylglucosamine 1-carboxyvinyltransferase</fullName>
        <ecNumber evidence="1">2.5.1.7</ecNumber>
    </recommendedName>
    <alternativeName>
        <fullName evidence="1">Enoylpyruvate transferase</fullName>
    </alternativeName>
    <alternativeName>
        <fullName evidence="1">UDP-N-acetylglucosamine enolpyruvyl transferase</fullName>
        <shortName evidence="1">EPT</shortName>
    </alternativeName>
</protein>
<evidence type="ECO:0000255" key="1">
    <source>
        <dbReference type="HAMAP-Rule" id="MF_00111"/>
    </source>
</evidence>
<reference key="1">
    <citation type="submission" date="2006-02" db="EMBL/GenBank/DDBJ databases">
        <title>Complete sequence of chromosome of Jannaschia sp. CCS1.</title>
        <authorList>
            <consortium name="US DOE Joint Genome Institute"/>
            <person name="Copeland A."/>
            <person name="Lucas S."/>
            <person name="Lapidus A."/>
            <person name="Barry K."/>
            <person name="Detter J.C."/>
            <person name="Glavina del Rio T."/>
            <person name="Hammon N."/>
            <person name="Israni S."/>
            <person name="Pitluck S."/>
            <person name="Brettin T."/>
            <person name="Bruce D."/>
            <person name="Han C."/>
            <person name="Tapia R."/>
            <person name="Gilna P."/>
            <person name="Chertkov O."/>
            <person name="Saunders E."/>
            <person name="Schmutz J."/>
            <person name="Larimer F."/>
            <person name="Land M."/>
            <person name="Kyrpides N."/>
            <person name="Lykidis A."/>
            <person name="Moran M.A."/>
            <person name="Belas R."/>
            <person name="Ye W."/>
            <person name="Buchan A."/>
            <person name="Gonzalez J.M."/>
            <person name="Schell M.A."/>
            <person name="Richardson P."/>
        </authorList>
    </citation>
    <scope>NUCLEOTIDE SEQUENCE [LARGE SCALE GENOMIC DNA]</scope>
    <source>
        <strain>CCS1</strain>
    </source>
</reference>
<gene>
    <name evidence="1" type="primary">murA</name>
    <name type="ordered locus">Jann_2886</name>
</gene>